<dbReference type="EMBL" id="AF431891">
    <property type="protein sequence ID" value="AAL28102.1"/>
    <property type="molecule type" value="mRNA"/>
</dbReference>
<dbReference type="EMBL" id="AF431892">
    <property type="protein sequence ID" value="AAL28103.1"/>
    <property type="molecule type" value="mRNA"/>
</dbReference>
<dbReference type="EMBL" id="AF431893">
    <property type="protein sequence ID" value="AAL28104.1"/>
    <property type="molecule type" value="mRNA"/>
</dbReference>
<dbReference type="EMBL" id="AL021497">
    <property type="protein sequence ID" value="CAB54459.2"/>
    <property type="molecule type" value="Genomic_DNA"/>
</dbReference>
<dbReference type="EMBL" id="AL021497">
    <property type="protein sequence ID" value="CAD27617.1"/>
    <property type="molecule type" value="Genomic_DNA"/>
</dbReference>
<dbReference type="EMBL" id="AL021497">
    <property type="protein sequence ID" value="CAD27618.1"/>
    <property type="molecule type" value="Genomic_DNA"/>
</dbReference>
<dbReference type="PIR" id="T27083">
    <property type="entry name" value="T27083"/>
</dbReference>
<dbReference type="RefSeq" id="NP_001024259.1">
    <molecule id="Q95V25-1"/>
    <property type="nucleotide sequence ID" value="NM_001029088.2"/>
</dbReference>
<dbReference type="RefSeq" id="NP_001024260.1">
    <molecule id="Q95V25-2"/>
    <property type="nucleotide sequence ID" value="NM_001029089.3"/>
</dbReference>
<dbReference type="RefSeq" id="NP_001024261.1">
    <molecule id="Q95V25-3"/>
    <property type="nucleotide sequence ID" value="NM_001029090.5"/>
</dbReference>
<dbReference type="SMR" id="Q95V25"/>
<dbReference type="BioGRID" id="45173">
    <property type="interactions" value="3"/>
</dbReference>
<dbReference type="FunCoup" id="Q95V25">
    <property type="interactions" value="1276"/>
</dbReference>
<dbReference type="MINT" id="Q95V25"/>
<dbReference type="STRING" id="6239.Y51A2D.19d.1"/>
<dbReference type="ChEMBL" id="CHEMBL3085614"/>
<dbReference type="TCDB" id="1.A.1.3.3">
    <property type="family name" value="the voltage-gated ion channel (vic) superfamily"/>
</dbReference>
<dbReference type="iPTMnet" id="Q95V25"/>
<dbReference type="PaxDb" id="6239-Y51A2D.19d"/>
<dbReference type="EnsemblMetazoa" id="Y51A2D.19a.1">
    <molecule id="Q95V25-1"/>
    <property type="protein sequence ID" value="Y51A2D.19a.1"/>
    <property type="gene ID" value="WBGene00004830"/>
</dbReference>
<dbReference type="EnsemblMetazoa" id="Y51A2D.19b.1">
    <molecule id="Q95V25-2"/>
    <property type="protein sequence ID" value="Y51A2D.19b.1"/>
    <property type="gene ID" value="WBGene00004830"/>
</dbReference>
<dbReference type="EnsemblMetazoa" id="Y51A2D.19c.1">
    <molecule id="Q95V25-3"/>
    <property type="protein sequence ID" value="Y51A2D.19c.1"/>
    <property type="gene ID" value="WBGene00004830"/>
</dbReference>
<dbReference type="GeneID" id="180203"/>
<dbReference type="KEGG" id="cel:CELE_Y51A2D.19"/>
<dbReference type="UCSC" id="Y51A2D.19a">
    <molecule id="Q95V25-1"/>
    <property type="organism name" value="c. elegans"/>
</dbReference>
<dbReference type="AGR" id="WB:WBGene00004830"/>
<dbReference type="CTD" id="180203"/>
<dbReference type="WormBase" id="Y51A2D.19a">
    <molecule id="Q95V25-1"/>
    <property type="protein sequence ID" value="CE30364"/>
    <property type="gene ID" value="WBGene00004830"/>
    <property type="gene designation" value="slo-1"/>
</dbReference>
<dbReference type="WormBase" id="Y51A2D.19b">
    <molecule id="Q95V25-2"/>
    <property type="protein sequence ID" value="CE30365"/>
    <property type="gene ID" value="WBGene00004830"/>
    <property type="gene designation" value="slo-1"/>
</dbReference>
<dbReference type="WormBase" id="Y51A2D.19c">
    <molecule id="Q95V25-3"/>
    <property type="protein sequence ID" value="CE30366"/>
    <property type="gene ID" value="WBGene00004830"/>
    <property type="gene designation" value="slo-1"/>
</dbReference>
<dbReference type="eggNOG" id="KOG1420">
    <property type="taxonomic scope" value="Eukaryota"/>
</dbReference>
<dbReference type="GeneTree" id="ENSGT00940000168407"/>
<dbReference type="InParanoid" id="Q95V25"/>
<dbReference type="OrthoDB" id="10035564at2759"/>
<dbReference type="PhylomeDB" id="Q95V25"/>
<dbReference type="Reactome" id="R-CEL-1300642">
    <property type="pathway name" value="Sperm Motility And Taxes"/>
</dbReference>
<dbReference type="PRO" id="PR:Q95V25"/>
<dbReference type="Proteomes" id="UP000001940">
    <property type="component" value="Chromosome V"/>
</dbReference>
<dbReference type="Bgee" id="WBGene00004830">
    <property type="expression patterns" value="Expressed in pharyngeal muscle cell (C elegans) and 3 other cell types or tissues"/>
</dbReference>
<dbReference type="ExpressionAtlas" id="Q95V25">
    <property type="expression patterns" value="baseline and differential"/>
</dbReference>
<dbReference type="GO" id="GO:0031430">
    <property type="term" value="C:M band"/>
    <property type="evidence" value="ECO:0000314"/>
    <property type="project" value="WormBase"/>
</dbReference>
<dbReference type="GO" id="GO:0034702">
    <property type="term" value="C:monoatomic ion channel complex"/>
    <property type="evidence" value="ECO:0007669"/>
    <property type="project" value="UniProtKB-KW"/>
</dbReference>
<dbReference type="GO" id="GO:0045211">
    <property type="term" value="C:postsynaptic membrane"/>
    <property type="evidence" value="ECO:0000318"/>
    <property type="project" value="GO_Central"/>
</dbReference>
<dbReference type="GO" id="GO:0055120">
    <property type="term" value="C:striated muscle dense body"/>
    <property type="evidence" value="ECO:0000314"/>
    <property type="project" value="WormBase"/>
</dbReference>
<dbReference type="GO" id="GO:0045202">
    <property type="term" value="C:synapse"/>
    <property type="evidence" value="ECO:0000314"/>
    <property type="project" value="WormBase"/>
</dbReference>
<dbReference type="GO" id="GO:0015269">
    <property type="term" value="F:calcium-activated potassium channel activity"/>
    <property type="evidence" value="ECO:0000314"/>
    <property type="project" value="WormBase"/>
</dbReference>
<dbReference type="GO" id="GO:0060072">
    <property type="term" value="F:large conductance calcium-activated potassium channel activity"/>
    <property type="evidence" value="ECO:0000318"/>
    <property type="project" value="GO_Central"/>
</dbReference>
<dbReference type="GO" id="GO:0046872">
    <property type="term" value="F:metal ion binding"/>
    <property type="evidence" value="ECO:0007669"/>
    <property type="project" value="UniProtKB-KW"/>
</dbReference>
<dbReference type="GO" id="GO:0005249">
    <property type="term" value="F:voltage-gated potassium channel activity"/>
    <property type="evidence" value="ECO:0000314"/>
    <property type="project" value="WormBase"/>
</dbReference>
<dbReference type="GO" id="GO:0048149">
    <property type="term" value="P:behavioral response to ethanol"/>
    <property type="evidence" value="ECO:0000315"/>
    <property type="project" value="WormBase"/>
</dbReference>
<dbReference type="GO" id="GO:0040011">
    <property type="term" value="P:locomotion"/>
    <property type="evidence" value="ECO:0000316"/>
    <property type="project" value="WormBase"/>
</dbReference>
<dbReference type="GO" id="GO:0050804">
    <property type="term" value="P:modulation of chemical synaptic transmission"/>
    <property type="evidence" value="ECO:0000316"/>
    <property type="project" value="WormBase"/>
</dbReference>
<dbReference type="GO" id="GO:0043050">
    <property type="term" value="P:nematode pharyngeal pumping"/>
    <property type="evidence" value="ECO:0000315"/>
    <property type="project" value="WormBase"/>
</dbReference>
<dbReference type="GO" id="GO:0071805">
    <property type="term" value="P:potassium ion transmembrane transport"/>
    <property type="evidence" value="ECO:0000318"/>
    <property type="project" value="GO_Central"/>
</dbReference>
<dbReference type="GO" id="GO:0006813">
    <property type="term" value="P:potassium ion transport"/>
    <property type="evidence" value="ECO:0000314"/>
    <property type="project" value="WormBase"/>
</dbReference>
<dbReference type="GO" id="GO:0046928">
    <property type="term" value="P:regulation of neurotransmitter secretion"/>
    <property type="evidence" value="ECO:0000315"/>
    <property type="project" value="WormBase"/>
</dbReference>
<dbReference type="GO" id="GO:0009410">
    <property type="term" value="P:response to xenobiotic stimulus"/>
    <property type="evidence" value="ECO:0000315"/>
    <property type="project" value="WormBase"/>
</dbReference>
<dbReference type="GO" id="GO:0045214">
    <property type="term" value="P:sarcomere organization"/>
    <property type="evidence" value="ECO:0000316"/>
    <property type="project" value="WormBase"/>
</dbReference>
<dbReference type="FunFam" id="1.20.120.350:FF:000035">
    <property type="entry name" value="Calcium-activated potassium channel slowpoke"/>
    <property type="match status" value="1"/>
</dbReference>
<dbReference type="FunFam" id="3.40.50.720:FF:000005">
    <property type="entry name" value="calcium-activated potassium channel subunit alpha-1 isoform X6"/>
    <property type="match status" value="1"/>
</dbReference>
<dbReference type="FunFam" id="1.10.287.70:FF:000015">
    <property type="entry name" value="Calcium-activated potassium channel subunit alpha-1 isoform X7"/>
    <property type="match status" value="1"/>
</dbReference>
<dbReference type="Gene3D" id="1.10.287.70">
    <property type="match status" value="1"/>
</dbReference>
<dbReference type="Gene3D" id="3.40.50.720">
    <property type="entry name" value="NAD(P)-binding Rossmann-like Domain"/>
    <property type="match status" value="2"/>
</dbReference>
<dbReference type="Gene3D" id="1.20.120.350">
    <property type="entry name" value="Voltage-gated potassium channels. Chain C"/>
    <property type="match status" value="1"/>
</dbReference>
<dbReference type="InterPro" id="IPR005821">
    <property type="entry name" value="Ion_trans_dom"/>
</dbReference>
<dbReference type="InterPro" id="IPR003929">
    <property type="entry name" value="K_chnl_BK_asu"/>
</dbReference>
<dbReference type="InterPro" id="IPR047871">
    <property type="entry name" value="K_chnl_Slo-like"/>
</dbReference>
<dbReference type="InterPro" id="IPR036291">
    <property type="entry name" value="NAD(P)-bd_dom_sf"/>
</dbReference>
<dbReference type="InterPro" id="IPR003148">
    <property type="entry name" value="RCK_N"/>
</dbReference>
<dbReference type="InterPro" id="IPR048735">
    <property type="entry name" value="Slowpoke-like_C"/>
</dbReference>
<dbReference type="InterPro" id="IPR027359">
    <property type="entry name" value="Volt_channel_dom_sf"/>
</dbReference>
<dbReference type="PANTHER" id="PTHR10027">
    <property type="entry name" value="CALCIUM-ACTIVATED POTASSIUM CHANNEL ALPHA CHAIN"/>
    <property type="match status" value="1"/>
</dbReference>
<dbReference type="PANTHER" id="PTHR10027:SF33">
    <property type="entry name" value="CALCIUM-ACTIVATED POTASSIUM CHANNEL SUBUNIT ALPHA-1-RELATED"/>
    <property type="match status" value="1"/>
</dbReference>
<dbReference type="Pfam" id="PF03493">
    <property type="entry name" value="BK_channel_a"/>
    <property type="match status" value="1"/>
</dbReference>
<dbReference type="Pfam" id="PF00520">
    <property type="entry name" value="Ion_trans"/>
    <property type="match status" value="1"/>
</dbReference>
<dbReference type="Pfam" id="PF22614">
    <property type="entry name" value="Slo-like_RCK"/>
    <property type="match status" value="2"/>
</dbReference>
<dbReference type="Pfam" id="PF21014">
    <property type="entry name" value="Slowpoke_C"/>
    <property type="match status" value="1"/>
</dbReference>
<dbReference type="PRINTS" id="PR01449">
    <property type="entry name" value="BKCHANNELA"/>
</dbReference>
<dbReference type="PRINTS" id="PR00169">
    <property type="entry name" value="KCHANNEL"/>
</dbReference>
<dbReference type="SUPFAM" id="SSF51735">
    <property type="entry name" value="NAD(P)-binding Rossmann-fold domains"/>
    <property type="match status" value="1"/>
</dbReference>
<dbReference type="SUPFAM" id="SSF81324">
    <property type="entry name" value="Voltage-gated potassium channels"/>
    <property type="match status" value="1"/>
</dbReference>
<dbReference type="PROSITE" id="PS51201">
    <property type="entry name" value="RCK_N"/>
    <property type="match status" value="2"/>
</dbReference>
<accession>Q95V25</accession>
<accession>Q95V26</accession>
<accession>Q95V27</accession>
<accession>Q9U268</accession>
<keyword id="KW-0025">Alternative splicing</keyword>
<keyword id="KW-0106">Calcium</keyword>
<keyword id="KW-1003">Cell membrane</keyword>
<keyword id="KW-0407">Ion channel</keyword>
<keyword id="KW-0406">Ion transport</keyword>
<keyword id="KW-0460">Magnesium</keyword>
<keyword id="KW-0472">Membrane</keyword>
<keyword id="KW-0479">Metal-binding</keyword>
<keyword id="KW-0597">Phosphoprotein</keyword>
<keyword id="KW-0630">Potassium</keyword>
<keyword id="KW-0631">Potassium channel</keyword>
<keyword id="KW-0633">Potassium transport</keyword>
<keyword id="KW-1185">Reference proteome</keyword>
<keyword id="KW-0770">Synapse</keyword>
<keyword id="KW-0812">Transmembrane</keyword>
<keyword id="KW-1133">Transmembrane helix</keyword>
<keyword id="KW-0813">Transport</keyword>
<keyword id="KW-0851">Voltage-gated channel</keyword>
<protein>
    <recommendedName>
        <fullName>Calcium-activated potassium channel slo-1</fullName>
    </recommendedName>
    <alternativeName>
        <fullName>BK channel</fullName>
    </alternativeName>
    <alternativeName>
        <fullName>Maxi K channel</fullName>
        <shortName>MaxiK</shortName>
    </alternativeName>
    <alternativeName>
        <fullName>Slo homolog</fullName>
    </alternativeName>
    <alternativeName>
        <fullName>Slowpoke protein 1</fullName>
    </alternativeName>
</protein>
<name>SLO1_CAEEL</name>
<sequence>MGEIYSPSQSKGFNQPYGYPMNCNLSRVFMEMTEEDRKCLEERKYWCFLLSSITTFCASMILVVIWRVVTHLCCQRREKEFVEPIPAPEAVQINMNGSKHAPSETDPFLKQQEEKHLGWMTEAKDWAGELISGQSLTGRFLVLLVFILSIGSLIIYFYDASFQNFQVETCIPWQDSPSQQIDLGFNIFFLVYFFIRFIAASDKVWFLLEMYSWIDFFTIPPSFVAIYLQRNWLGFRFLRALRLMTVPDILQYLNILKTSSSIRLTQLVTIFVAVCLTGAGLVHLLENSGDFFKGFINPHRITYADSVYFVLVTMSTVGYGDIYCTTLCGRLFMIFFILFGLAMFASYVPEIADLIGNRQKYGGEYKGEHGKKHIVVCGHITYDSVSHFLQDFLHEDRDDVDVEVVFLHRVVPDLELEGLFKRHFTKVEFFTGTVMDSLDLSRVKIGDADACLVLANKYSTNPDAEDAANIMRVISIKNYSSDIRVIVQLMQYHNKAYLLNIPSWDWKRGDDVICLAELKLGFIAQSCLAPGFSTMMANLFAMRSFKTSQTTPDWLNLYLCGAGMEMYTDTLSHSFVGMTFPEAVDLLFNRLGLLLLAIELKDEENKECNIAINPGPHIVIQPQTQGFFIAQSADEVKRAFFWCKQCHDDIKDVSLIKKCKCKNLALFRRNTKHSTAARARATDVLQQFQPQAPAGPMGHLGQQVQLRMINQQSSTSDTHLNTKSLRFAYEIKKLMPSSGGRRNSMSIPPDGRGVDFSKDFEQQFQDMKYDSTGMFHWCPSRNLEDCVLERHQAAMTVLNGHVVVCLFADQDSPLIGLRNFIMPLRSSNFHYHELKHVVIVGDLEYLRKEWKTLYNLPKISILNGSPLSRADLRAVNINLCDMCVIISARVPNTEDTTLADKEAILASLNIKAMQFDDTLGFFPMRHQTGDRSPLGSPISMQKKGAKFGTNVPMITELVNDSNVQFLDQDDDDDPDTELYLTQPFACGTAFAISVLDSLMSTTYFNDSALTLIRTLVTGGATPELELILAEGAGLRGGYSTPETLSNRDRCRIAQISLQDNPYDGVVHNTTYGAMFTIALRRYGQLCIGLYRLHDQDNPDSMKRYVITNPPAELRIKNTDYVYVLEQFDPGLEYEPGKRHF</sequence>
<gene>
    <name evidence="14" type="primary">slo-1</name>
    <name evidence="14" type="ORF">Y51A2D.19</name>
</gene>
<feature type="chain" id="PRO_0000054140" description="Calcium-activated potassium channel slo-1">
    <location>
        <begin position="1"/>
        <end position="1140"/>
    </location>
</feature>
<feature type="topological domain" description="Extracellular" evidence="3">
    <location>
        <begin position="1"/>
        <end position="44"/>
    </location>
</feature>
<feature type="transmembrane region" description="Helical; Name=Segment S0" evidence="3">
    <location>
        <begin position="45"/>
        <end position="65"/>
    </location>
</feature>
<feature type="topological domain" description="Cytoplasmic" evidence="3">
    <location>
        <begin position="66"/>
        <end position="139"/>
    </location>
</feature>
<feature type="transmembrane region" description="Helical; Name=Segment S1" evidence="3">
    <location>
        <begin position="140"/>
        <end position="161"/>
    </location>
</feature>
<feature type="topological domain" description="Extracellular" evidence="3">
    <location>
        <begin position="162"/>
        <end position="178"/>
    </location>
</feature>
<feature type="transmembrane region" description="Helical; Name=Segment S2" evidence="3">
    <location>
        <begin position="179"/>
        <end position="199"/>
    </location>
</feature>
<feature type="topological domain" description="Cytoplasmic" evidence="3">
    <location>
        <begin position="200"/>
        <end position="203"/>
    </location>
</feature>
<feature type="transmembrane region" description="Helical; Name=Segment S3" evidence="3">
    <location>
        <begin position="204"/>
        <end position="224"/>
    </location>
</feature>
<feature type="topological domain" description="Extracellular" evidence="3">
    <location>
        <begin position="225"/>
        <end position="228"/>
    </location>
</feature>
<feature type="transmembrane region" description="Helical; Voltage-sensor; Name=Segment S4" evidence="3">
    <location>
        <begin position="229"/>
        <end position="249"/>
    </location>
</feature>
<feature type="topological domain" description="Cytoplasmic" evidence="3">
    <location>
        <begin position="250"/>
        <end position="264"/>
    </location>
</feature>
<feature type="transmembrane region" description="Helical; Name=Segment S5" evidence="3">
    <location>
        <begin position="265"/>
        <end position="285"/>
    </location>
</feature>
<feature type="topological domain" description="Extracellular" evidence="3">
    <location>
        <begin position="286"/>
        <end position="299"/>
    </location>
</feature>
<feature type="intramembrane region" description="Pore-forming; Name=P region" evidence="3">
    <location>
        <begin position="300"/>
        <end position="322"/>
    </location>
</feature>
<feature type="topological domain" description="Extracellular" evidence="3">
    <location>
        <begin position="323"/>
        <end position="331"/>
    </location>
</feature>
<feature type="transmembrane region" description="Helical; Name=Segment S6" evidence="3">
    <location>
        <begin position="332"/>
        <end position="352"/>
    </location>
</feature>
<feature type="topological domain" description="Cytoplasmic" evidence="3">
    <location>
        <begin position="353"/>
        <end position="1140"/>
    </location>
</feature>
<feature type="domain" description="RCK N-terminal 1" evidence="4">
    <location>
        <begin position="371"/>
        <end position="514"/>
    </location>
</feature>
<feature type="domain" description="RCK N-terminal 2" evidence="4">
    <location>
        <begin position="799"/>
        <end position="953"/>
    </location>
</feature>
<feature type="region of interest" description="Segment S7">
    <location>
        <begin position="520"/>
        <end position="540"/>
    </location>
</feature>
<feature type="region of interest" description="Segment S8">
    <location>
        <begin position="578"/>
        <end position="598"/>
    </location>
</feature>
<feature type="region of interest" description="Segment S9">
    <location>
        <begin position="797"/>
        <end position="817"/>
    </location>
</feature>
<feature type="region of interest" description="Segment S10">
    <location>
        <begin position="984"/>
        <end position="1004"/>
    </location>
</feature>
<feature type="short sequence motif" description="Selectivity for potassium">
    <location>
        <begin position="316"/>
        <end position="319"/>
    </location>
</feature>
<feature type="short sequence motif" description="Calcium bowl">
    <location>
        <begin position="955"/>
        <end position="977"/>
    </location>
</feature>
<feature type="binding site" evidence="2">
    <location>
        <position position="964"/>
    </location>
    <ligand>
        <name>Ca(2+)</name>
        <dbReference type="ChEBI" id="CHEBI:29108"/>
    </ligand>
</feature>
<feature type="binding site" evidence="2">
    <location>
        <position position="967"/>
    </location>
    <ligand>
        <name>Ca(2+)</name>
        <dbReference type="ChEBI" id="CHEBI:29108"/>
    </ligand>
</feature>
<feature type="binding site" evidence="2">
    <location>
        <position position="970"/>
    </location>
    <ligand>
        <name>Ca(2+)</name>
        <dbReference type="ChEBI" id="CHEBI:29108"/>
    </ligand>
</feature>
<feature type="binding site" evidence="2">
    <location>
        <position position="972"/>
    </location>
    <ligand>
        <name>Ca(2+)</name>
        <dbReference type="ChEBI" id="CHEBI:29108"/>
    </ligand>
</feature>
<feature type="splice variant" id="VSP_009996" description="In isoform c." evidence="11">
    <original>QTTPDWLNLYLCGAGMEMYTDTLSHSFVGMTFPEAVD</original>
    <variation>PHTPLWLNDYLRGAGMEMYTESLSPSFANMSFPEAAN</variation>
    <location>
        <begin position="549"/>
        <end position="585"/>
    </location>
</feature>
<feature type="splice variant" id="VSP_009997" description="In isoform c." evidence="11">
    <original>R</original>
    <variation>RDYSDFDALFYQND</variation>
    <location>
        <position position="678"/>
    </location>
</feature>
<feature type="splice variant" id="VSP_009998" description="In isoform b and isoform c." evidence="11">
    <original>SSTSDTHLNTKSLRFAYEIKKLM</original>
    <variation>R</variation>
    <location>
        <begin position="713"/>
        <end position="735"/>
    </location>
</feature>
<feature type="mutagenesis site" description="In eg142; exhibits resistance to ethanol-induced suppression of locomotory and egg-laying behaviors." evidence="8">
    <location>
        <begin position="46"/>
        <end position="1140"/>
    </location>
</feature>
<feature type="mutagenesis site" description="In md1745; increases synaptic transmission at neuromuscular junctions reported as the amplitude of evoked postsynaptic currents and miniature postsynaptic currents. Exogenous melatonin does not decrease synaptic transmissions contrary to the wild-type. Decreases total and motionless sleep but increases frequency of active events." evidence="10">
    <location>
        <begin position="134"/>
        <end position="1140"/>
    </location>
</feature>
<feature type="mutagenesis site" description="In js379; reduces rate of motor activity decline during aging, thereby increasing motor activity during mid-late life and extending life span. Does not reduce the frequency of endogenous postsynaptic current in aged worms, in contrast to the wild-type." evidence="7">
    <location>
        <begin position="251"/>
        <end position="1140"/>
    </location>
</feature>
<feature type="mutagenesis site" description="In md1715; induces prolonged synaptic release." evidence="5">
    <original>G</original>
    <variation>E</variation>
    <location>
        <position position="289"/>
    </location>
</feature>
<feature type="mutagenesis site" description="In ky399gf; gain of function. Insensitive to the acetylcholinesterase inhibitor aldicarb, and exhibits locomotory speed defects. These defects are suppressed in erg-28 background mutant, but restored in erg-28 and sel-11 double background mutant." evidence="6 9">
    <original>E</original>
    <variation>K</variation>
    <location>
        <position position="350"/>
    </location>
</feature>
<feature type="mutagenesis site" description="In cim113; reduces the frequency of lateral swimming, known as thrashing, by comparison with wild-type. This defect is suppressed in erg-28 background mutant, but restored in erg-28 and sel-11 double background mutant." evidence="9">
    <original>E</original>
    <variation>Q</variation>
    <location>
        <position position="350"/>
    </location>
</feature>
<comment type="function">
    <text evidence="5 6 7 8 10">Potassium channel activated by both membrane depolarization or increase in cytosolic Ca(2+) that mediates export of K(+) (PubMed:11738032). Its activation dampens the excitatory events that elevate the cytosolic Ca(2+) concentration and/or depolarize the cell membrane (PubMed:11738032). It therefore contributes to repolarization of the membrane potential (PubMed:11738032). Essential for the regulation of neurotransmitter release at synapses (PubMed:11738032, PubMed:28168949, PubMed:32958651). Regulates longevity and age-associated decline in motor activity in mid-late life, by acting in motor neurons and through daf-16 in the intestine (PubMed:30613772). When clustered in neurons, mediates ethanol-induced suppression of locomotory and egg-laying behaviors (PubMed:31308408).</text>
</comment>
<comment type="subunit">
    <text evidence="1">Homotetramer; which constitutes the calcium-activated potassium channel.</text>
</comment>
<comment type="subcellular location">
    <subcellularLocation>
        <location evidence="13">Cell membrane</location>
        <topology evidence="12">Multi-pass membrane protein</topology>
    </subcellularLocation>
    <subcellularLocation>
        <location evidence="6">Synapse</location>
    </subcellularLocation>
</comment>
<comment type="alternative products">
    <event type="alternative splicing"/>
    <isoform>
        <id>Q95V25-1</id>
        <name>a</name>
        <sequence type="displayed"/>
    </isoform>
    <isoform>
        <id>Q95V25-2</id>
        <name>b</name>
        <sequence type="described" ref="VSP_009998"/>
    </isoform>
    <isoform>
        <id>Q95V25-3</id>
        <name>c</name>
        <sequence type="described" ref="VSP_009996 VSP_009997 VSP_009998"/>
    </isoform>
</comment>
<comment type="tissue specificity">
    <text evidence="5 6 7 8 10">Expressed in synaptic regions of the nervous system including in both the nerve ring and nerve cords, as well as in the body-wall and vulval muscle (PubMed:11738032, PubMed:28168949, PubMed:32958651). Expressed broadly in motor neurons (PubMed:30613772). Forms puncta at presynaptic terminals of neurons, muscle excitation sites, and in the dorsal nerve cord (PubMed:31308408).</text>
</comment>
<comment type="domain">
    <text evidence="1">The S4 segment, which is characterized by a series of positively charged amino acids at every third position, is part of the voltage-sensor.</text>
</comment>
<comment type="domain">
    <text evidence="1">The pore-forming domain (also referred as P region) is imbedded into the membrane, and forms the selectivity filter of the pore. It contains the signature sequence of potassium channels that displays selectivity to potassium (By similarity).</text>
</comment>
<comment type="domain">
    <text evidence="1">The RCK N-terminal domain mediates the homotetramerization, thereby promoting the assembly of monomers into functional potassium channel. It includes binding sites for Ca(2+) and Mg(2+) (By similarity).</text>
</comment>
<comment type="domain">
    <text evidence="1">The calcium bowl constitutes one of the Ca(2+) sensors and probably acts as a Ca(2+)-binding site.</text>
</comment>
<comment type="PTM">
    <text evidence="1">Phosphorylated.</text>
</comment>
<comment type="disruption phenotype">
    <text evidence="7">RNAi-mediated knockdown in young worms (1 day old) fails to increase motor activity in mid-late life, but in older worms (5 - 7 days old) reduces the rate of motor activity decline, resulting in higher motor activity in mid-late life and increased life span.</text>
</comment>
<comment type="miscellaneous">
    <text>Its activity is activated by ethanol, leading to the inhibition of neuronal activity.</text>
</comment>
<comment type="similarity">
    <text evidence="12">Belongs to the potassium channel family. Calcium-activated (TC 1.A.1.3) subfamily. Slo sub-subfamily.</text>
</comment>
<organism>
    <name type="scientific">Caenorhabditis elegans</name>
    <dbReference type="NCBI Taxonomy" id="6239"/>
    <lineage>
        <taxon>Eukaryota</taxon>
        <taxon>Metazoa</taxon>
        <taxon>Ecdysozoa</taxon>
        <taxon>Nematoda</taxon>
        <taxon>Chromadorea</taxon>
        <taxon>Rhabditida</taxon>
        <taxon>Rhabditina</taxon>
        <taxon>Rhabditomorpha</taxon>
        <taxon>Rhabditoidea</taxon>
        <taxon>Rhabditidae</taxon>
        <taxon>Peloderinae</taxon>
        <taxon>Caenorhabditis</taxon>
    </lineage>
</organism>
<reference key="1">
    <citation type="journal article" date="2001" name="Neuron">
        <title>SLO-1 potassium channels control quantal content of neurotransmitter release at the C. elegans neuromuscular junction.</title>
        <authorList>
            <person name="Wang Z.-W."/>
            <person name="Saifee O."/>
            <person name="Nonet M.L."/>
            <person name="Salkoff L."/>
        </authorList>
    </citation>
    <scope>NUCLEOTIDE SEQUENCE [MRNA] (ISOFORMS A; B AND C)</scope>
    <scope>FUNCTION</scope>
    <scope>TISSUE SPECIFICITY</scope>
    <scope>MUTAGENESIS OF GLY-289</scope>
</reference>
<reference key="2">
    <citation type="journal article" date="1998" name="Science">
        <title>Genome sequence of the nematode C. elegans: a platform for investigating biology.</title>
        <authorList>
            <consortium name="The C. elegans sequencing consortium"/>
        </authorList>
    </citation>
    <scope>NUCLEOTIDE SEQUENCE [LARGE SCALE GENOMIC DNA]</scope>
    <scope>ALTERNATIVE SPLICING</scope>
    <source>
        <strain>Bristol N2</strain>
    </source>
</reference>
<reference key="3">
    <citation type="journal article" date="2003" name="Cell">
        <title>A central role of the BK potassium channel in behavioral responses to ethanol in C. elegans.</title>
        <authorList>
            <person name="Davies A.G."/>
            <person name="Pierce-Shimomura J.T."/>
            <person name="Kim H."/>
            <person name="VanHoven M.K."/>
            <person name="Thiele T.R."/>
            <person name="Bonci A."/>
            <person name="Bargmann C.I."/>
            <person name="McIntire S.L."/>
        </authorList>
    </citation>
    <scope>RESPONSE TO ETHANOL</scope>
</reference>
<reference key="4">
    <citation type="journal article" date="2017" name="Elife">
        <title>ERG-28 controls BK channel trafficking in the ER to regulate synaptic function and alcohol response in C. elegans.</title>
        <authorList>
            <person name="Oh K.H."/>
            <person name="Haney J.J."/>
            <person name="Wang X."/>
            <person name="Chuang C.F."/>
            <person name="Richmond J.E."/>
            <person name="Kim H."/>
        </authorList>
    </citation>
    <scope>FUNCTION</scope>
    <scope>SUBCELLULAR LOCATION</scope>
    <scope>TISSUE SPECIFICITY</scope>
    <scope>MUTAGENESIS OF GLU-350</scope>
</reference>
<reference evidence="12" key="5">
    <citation type="journal article" date="2019" name="Sci. Adv.">
        <title>Genetic and pharmacological interventions in the aging motor nervous system slow motor impairment and extend life span in C. elegans.</title>
        <authorList>
            <person name="Li G."/>
            <person name="Gong J."/>
            <person name="Liu J."/>
            <person name="Liu J."/>
            <person name="Li H."/>
            <person name="Hsu A.L."/>
            <person name="Liu J."/>
            <person name="Xu X.Z.S."/>
        </authorList>
    </citation>
    <scope>FUNCTION</scope>
    <scope>TISSUE SPECIFICITY</scope>
    <scope>DISRUPTION PHENOTYPE</scope>
    <scope>MUTAGENESIS OF 251-GLN--ARG-1138</scope>
</reference>
<reference evidence="12" key="6">
    <citation type="journal article" date="2019" name="Sci. Rep.">
        <title>BK channel clustering is required for normal behavioral alcohol sensitivity in C. elegans.</title>
        <authorList>
            <person name="Oh K.H."/>
            <person name="Kim H."/>
        </authorList>
    </citation>
    <scope>FUNCTION</scope>
    <scope>TISSUE SPECIFICITY</scope>
    <scope>MUTAGENESIS OF 46-TRP--PHE-1140</scope>
</reference>
<reference evidence="12" key="7">
    <citation type="journal article" date="2020" name="PLoS Genet.">
        <title>BK channel density is regulated by endoplasmic reticulum associated degradation and influenced by the SKN-1A/NRF1 transcription factor.</title>
        <authorList>
            <person name="Cheung T.P."/>
            <person name="Choe J.Y."/>
            <person name="Richmond J.E."/>
            <person name="Kim H."/>
        </authorList>
    </citation>
    <scope>MUTAGENESIS OF GLU-350</scope>
</reference>
<reference evidence="12" key="8">
    <citation type="journal article" date="2020" name="Proc. Natl. Acad. Sci. U.S.A.">
        <title>Melatonin promotes sleep by activating the BK channel in C. elegans.</title>
        <authorList>
            <person name="Niu L."/>
            <person name="Li Y."/>
            <person name="Zong P."/>
            <person name="Liu P."/>
            <person name="Shui Y."/>
            <person name="Chen B."/>
            <person name="Wang Z.W."/>
        </authorList>
    </citation>
    <scope>FUNCTION</scope>
    <scope>TISSUE SPECIFICITY</scope>
    <scope>MUTAGENESIS OF 134-GLN--PHE-1140</scope>
</reference>
<proteinExistence type="evidence at protein level"/>
<evidence type="ECO:0000250" key="1"/>
<evidence type="ECO:0000250" key="2">
    <source>
        <dbReference type="UniProtKB" id="B7ZC96"/>
    </source>
</evidence>
<evidence type="ECO:0000255" key="3"/>
<evidence type="ECO:0000255" key="4">
    <source>
        <dbReference type="PROSITE-ProRule" id="PRU00543"/>
    </source>
</evidence>
<evidence type="ECO:0000269" key="5">
    <source>
    </source>
</evidence>
<evidence type="ECO:0000269" key="6">
    <source>
    </source>
</evidence>
<evidence type="ECO:0000269" key="7">
    <source>
    </source>
</evidence>
<evidence type="ECO:0000269" key="8">
    <source>
    </source>
</evidence>
<evidence type="ECO:0000269" key="9">
    <source>
    </source>
</evidence>
<evidence type="ECO:0000269" key="10">
    <source>
    </source>
</evidence>
<evidence type="ECO:0000303" key="11">
    <source>
    </source>
</evidence>
<evidence type="ECO:0000305" key="12"/>
<evidence type="ECO:0000305" key="13">
    <source>
    </source>
</evidence>
<evidence type="ECO:0000312" key="14">
    <source>
        <dbReference type="WormBase" id="Y51A2D.19a"/>
    </source>
</evidence>